<keyword id="KW-0244">Early protein</keyword>
<dbReference type="EMBL" id="X00203">
    <property type="protein sequence ID" value="CAA25024.1"/>
    <property type="molecule type" value="Genomic_DNA"/>
</dbReference>
<dbReference type="PIR" id="B20558">
    <property type="entry name" value="W5WL6B"/>
</dbReference>
<dbReference type="RefSeq" id="NP_040302.1">
    <property type="nucleotide sequence ID" value="NC_001355.1"/>
</dbReference>
<dbReference type="SMR" id="P06461"/>
<dbReference type="BioGRID" id="3509161">
    <property type="interactions" value="180"/>
</dbReference>
<dbReference type="IntAct" id="P06461">
    <property type="interactions" value="180"/>
</dbReference>
<dbReference type="MINT" id="P06461"/>
<dbReference type="GeneID" id="1489367"/>
<dbReference type="KEGG" id="vg:1489367"/>
<dbReference type="Proteomes" id="UP000007676">
    <property type="component" value="Genome"/>
</dbReference>
<dbReference type="InterPro" id="IPR035154">
    <property type="entry name" value="DUF5472"/>
</dbReference>
<dbReference type="Pfam" id="PF17566">
    <property type="entry name" value="DUF5472"/>
    <property type="match status" value="1"/>
</dbReference>
<reference key="1">
    <citation type="journal article" date="1983" name="EMBO J.">
        <title>DNA sequence and genome organization of genital human papillomavirus type 6b.</title>
        <authorList>
            <person name="Schwarz E."/>
            <person name="Durst M."/>
            <person name="Demankowski C."/>
            <person name="Lattermann O."/>
            <person name="Zech R."/>
            <person name="Wolfsperger E."/>
            <person name="Suhai S."/>
            <person name="zur Hausen H."/>
        </authorList>
    </citation>
    <scope>NUCLEOTIDE SEQUENCE [GENOMIC DNA]</scope>
</reference>
<organismHost>
    <name type="scientific">Homo sapiens</name>
    <name type="common">Human</name>
    <dbReference type="NCBI Taxonomy" id="9606"/>
</organismHost>
<protein>
    <recommendedName>
        <fullName>Probable protein E5B</fullName>
    </recommendedName>
</protein>
<organism>
    <name type="scientific">Human papillomavirus type 6b</name>
    <dbReference type="NCBI Taxonomy" id="10600"/>
    <lineage>
        <taxon>Viruses</taxon>
        <taxon>Monodnaviria</taxon>
        <taxon>Shotokuvirae</taxon>
        <taxon>Cossaviricota</taxon>
        <taxon>Papovaviricetes</taxon>
        <taxon>Zurhausenvirales</taxon>
        <taxon>Papillomaviridae</taxon>
        <taxon>Firstpapillomavirinae</taxon>
        <taxon>Alphapapillomavirus</taxon>
        <taxon>Alphapapillomavirus 10</taxon>
    </lineage>
</organism>
<accession>P06461</accession>
<feature type="chain" id="PRO_0000133312" description="Probable protein E5B">
    <location>
        <begin position="1"/>
        <end position="72"/>
    </location>
</feature>
<sequence length="72" mass="8415">MMLTCQFNDGDTWLGLWLLCAFIVGMLGLLLMHYRAVQGDKHTKCKKCNKHNCNDDYVTMHYTTDGDYIYMN</sequence>
<name>VE5B_HPV6B</name>
<proteinExistence type="predicted"/>